<protein>
    <recommendedName>
        <fullName evidence="1">Ribosome-recycling factor</fullName>
        <shortName evidence="1">RRF</shortName>
    </recommendedName>
    <alternativeName>
        <fullName evidence="1">Ribosome-releasing factor</fullName>
    </alternativeName>
</protein>
<evidence type="ECO:0000255" key="1">
    <source>
        <dbReference type="HAMAP-Rule" id="MF_00040"/>
    </source>
</evidence>
<proteinExistence type="inferred from homology"/>
<name>RRF_FLAJ1</name>
<organism>
    <name type="scientific">Flavobacterium johnsoniae (strain ATCC 17061 / DSM 2064 / JCM 8514 / BCRC 14874 / CCUG 350202 / NBRC 14942 / NCIMB 11054 / UW101)</name>
    <name type="common">Cytophaga johnsonae</name>
    <dbReference type="NCBI Taxonomy" id="376686"/>
    <lineage>
        <taxon>Bacteria</taxon>
        <taxon>Pseudomonadati</taxon>
        <taxon>Bacteroidota</taxon>
        <taxon>Flavobacteriia</taxon>
        <taxon>Flavobacteriales</taxon>
        <taxon>Flavobacteriaceae</taxon>
        <taxon>Flavobacterium</taxon>
    </lineage>
</organism>
<comment type="function">
    <text evidence="1">Responsible for the release of ribosomes from messenger RNA at the termination of protein biosynthesis. May increase the efficiency of translation by recycling ribosomes from one round of translation to another.</text>
</comment>
<comment type="subcellular location">
    <subcellularLocation>
        <location evidence="1">Cytoplasm</location>
    </subcellularLocation>
</comment>
<comment type="similarity">
    <text evidence="1">Belongs to the RRF family.</text>
</comment>
<sequence>MTEEIDFILESTEESMNGSIAHLEKEFLNIRAGKASPAMLGGVFVDYYGSATPLSQVSKISVPDARTITLQPFEKNMLQAIEKAILIANIGFNPMNNGDVIIISVPPLTEERRRDLAKQAKSEAEDAKIGIRNVRKDANTDIKKLEKEGTSEDICKSAEEEVQNLTNTYIKKIDELLAAKEAEIMKV</sequence>
<dbReference type="EMBL" id="CP000685">
    <property type="protein sequence ID" value="ABQ03610.1"/>
    <property type="molecule type" value="Genomic_DNA"/>
</dbReference>
<dbReference type="RefSeq" id="WP_012022666.1">
    <property type="nucleotide sequence ID" value="NC_009441.1"/>
</dbReference>
<dbReference type="SMR" id="A5FMF6"/>
<dbReference type="STRING" id="376686.Fjoh_0575"/>
<dbReference type="KEGG" id="fjo:Fjoh_0575"/>
<dbReference type="eggNOG" id="COG0233">
    <property type="taxonomic scope" value="Bacteria"/>
</dbReference>
<dbReference type="HOGENOM" id="CLU_073981_2_0_10"/>
<dbReference type="OrthoDB" id="9804006at2"/>
<dbReference type="Proteomes" id="UP000006694">
    <property type="component" value="Chromosome"/>
</dbReference>
<dbReference type="GO" id="GO:0005737">
    <property type="term" value="C:cytoplasm"/>
    <property type="evidence" value="ECO:0007669"/>
    <property type="project" value="UniProtKB-SubCell"/>
</dbReference>
<dbReference type="GO" id="GO:0043023">
    <property type="term" value="F:ribosomal large subunit binding"/>
    <property type="evidence" value="ECO:0007669"/>
    <property type="project" value="TreeGrafter"/>
</dbReference>
<dbReference type="GO" id="GO:0006415">
    <property type="term" value="P:translational termination"/>
    <property type="evidence" value="ECO:0007669"/>
    <property type="project" value="UniProtKB-UniRule"/>
</dbReference>
<dbReference type="CDD" id="cd00520">
    <property type="entry name" value="RRF"/>
    <property type="match status" value="1"/>
</dbReference>
<dbReference type="FunFam" id="1.10.132.20:FF:000001">
    <property type="entry name" value="Ribosome-recycling factor"/>
    <property type="match status" value="1"/>
</dbReference>
<dbReference type="FunFam" id="3.30.1360.40:FF:000001">
    <property type="entry name" value="Ribosome-recycling factor"/>
    <property type="match status" value="1"/>
</dbReference>
<dbReference type="Gene3D" id="3.30.1360.40">
    <property type="match status" value="1"/>
</dbReference>
<dbReference type="Gene3D" id="1.10.132.20">
    <property type="entry name" value="Ribosome-recycling factor"/>
    <property type="match status" value="1"/>
</dbReference>
<dbReference type="HAMAP" id="MF_00040">
    <property type="entry name" value="RRF"/>
    <property type="match status" value="1"/>
</dbReference>
<dbReference type="InterPro" id="IPR002661">
    <property type="entry name" value="Ribosome_recyc_fac"/>
</dbReference>
<dbReference type="InterPro" id="IPR023584">
    <property type="entry name" value="Ribosome_recyc_fac_dom"/>
</dbReference>
<dbReference type="InterPro" id="IPR036191">
    <property type="entry name" value="RRF_sf"/>
</dbReference>
<dbReference type="NCBIfam" id="TIGR00496">
    <property type="entry name" value="frr"/>
    <property type="match status" value="1"/>
</dbReference>
<dbReference type="PANTHER" id="PTHR20982:SF3">
    <property type="entry name" value="MITOCHONDRIAL RIBOSOME RECYCLING FACTOR PSEUDO 1"/>
    <property type="match status" value="1"/>
</dbReference>
<dbReference type="PANTHER" id="PTHR20982">
    <property type="entry name" value="RIBOSOME RECYCLING FACTOR"/>
    <property type="match status" value="1"/>
</dbReference>
<dbReference type="Pfam" id="PF01765">
    <property type="entry name" value="RRF"/>
    <property type="match status" value="1"/>
</dbReference>
<dbReference type="SUPFAM" id="SSF55194">
    <property type="entry name" value="Ribosome recycling factor, RRF"/>
    <property type="match status" value="1"/>
</dbReference>
<keyword id="KW-0963">Cytoplasm</keyword>
<keyword id="KW-0648">Protein biosynthesis</keyword>
<feature type="chain" id="PRO_0000341010" description="Ribosome-recycling factor">
    <location>
        <begin position="1"/>
        <end position="187"/>
    </location>
</feature>
<accession>A5FMF6</accession>
<reference key="1">
    <citation type="journal article" date="2009" name="Appl. Environ. Microbiol.">
        <title>Novel features of the polysaccharide-digesting gliding bacterium Flavobacterium johnsoniae as revealed by genome sequence analysis.</title>
        <authorList>
            <person name="McBride M.J."/>
            <person name="Xie G."/>
            <person name="Martens E.C."/>
            <person name="Lapidus A."/>
            <person name="Henrissat B."/>
            <person name="Rhodes R.G."/>
            <person name="Goltsman E."/>
            <person name="Wang W."/>
            <person name="Xu J."/>
            <person name="Hunnicutt D.W."/>
            <person name="Staroscik A.M."/>
            <person name="Hoover T.R."/>
            <person name="Cheng Y.Q."/>
            <person name="Stein J.L."/>
        </authorList>
    </citation>
    <scope>NUCLEOTIDE SEQUENCE [LARGE SCALE GENOMIC DNA]</scope>
    <source>
        <strain>ATCC 17061 / DSM 2064 / JCM 8514 / BCRC 14874 / CCUG 350202 / NBRC 14942 / NCIMB 11054 / UW101</strain>
    </source>
</reference>
<gene>
    <name evidence="1" type="primary">frr</name>
    <name type="ordered locus">Fjoh_0575</name>
</gene>